<proteinExistence type="inferred from homology"/>
<keyword id="KW-0963">Cytoplasm</keyword>
<keyword id="KW-0326">Glycosidase</keyword>
<keyword id="KW-0378">Hydrolase</keyword>
<keyword id="KW-1185">Reference proteome</keyword>
<feature type="chain" id="PRO_1000064448" description="Cytoplasmic trehalase">
    <location>
        <begin position="1"/>
        <end position="549"/>
    </location>
</feature>
<feature type="active site" description="Proton donor/acceptor" evidence="1">
    <location>
        <position position="326"/>
    </location>
</feature>
<feature type="active site" description="Proton donor/acceptor" evidence="1">
    <location>
        <position position="509"/>
    </location>
</feature>
<feature type="binding site" evidence="1">
    <location>
        <position position="168"/>
    </location>
    <ligand>
        <name>substrate</name>
    </ligand>
</feature>
<feature type="binding site" evidence="1">
    <location>
        <begin position="175"/>
        <end position="176"/>
    </location>
    <ligand>
        <name>substrate</name>
    </ligand>
</feature>
<feature type="binding site" evidence="1">
    <location>
        <position position="212"/>
    </location>
    <ligand>
        <name>substrate</name>
    </ligand>
</feature>
<feature type="binding site" evidence="1">
    <location>
        <begin position="221"/>
        <end position="223"/>
    </location>
    <ligand>
        <name>substrate</name>
    </ligand>
</feature>
<feature type="binding site" evidence="1">
    <location>
        <begin position="292"/>
        <end position="294"/>
    </location>
    <ligand>
        <name>substrate</name>
    </ligand>
</feature>
<feature type="binding site" evidence="1">
    <location>
        <position position="324"/>
    </location>
    <ligand>
        <name>substrate</name>
    </ligand>
</feature>
<feature type="binding site" evidence="1">
    <location>
        <position position="525"/>
    </location>
    <ligand>
        <name>substrate</name>
    </ligand>
</feature>
<sequence length="549" mass="63715">MLNQKIQNPNPDELMIEVDLCYELDPYELKLDEMIEAEPEPEMIEGLPASDALTPADRYLELFEHVQSAKIFPDSKTFPDCAPKMDPLDILIRYRKVRRHRDFDLRKFVENHFWLPEVYSSEYVSDPQNSLKEHIDQLWPVLTREPQDHIPWSSLLALPQSYIVPGGRFSETYYWDSYFTMLGLAESGREDLLKCMADNFAWMIENYGHIPNGNRTYYLSRSQPPVFALMVELFEEDGVRGARRYLDHLKMEYAFWMDGAESLIPNQAYRHVVRMPDGSLLNRYWDDRDTPRDESWLEDVETAKHSGRPPNEVYRDLRAGAASGWDYSSRWLRDTGRLASIRTTQFIPIDLNAFLFKLESAIANISALKGEKETEALFRQKASARRDAVNRYLWDDENGIYRDYDWRREQLALFSAAAIVPLYVGMANHEQADRLANAVRSRLLTPGGILASEYETGEQWDKPNGWAPLQWMAIQGFKMYGDDLLGDEIARSWLKTVNQFYLEQHKMIEKYHIADGVPREGGGGEYPLQDGFGWTNGVVRRLIGLYGEP</sequence>
<organism>
    <name type="scientific">Shigella sonnei (strain Ss046)</name>
    <dbReference type="NCBI Taxonomy" id="300269"/>
    <lineage>
        <taxon>Bacteria</taxon>
        <taxon>Pseudomonadati</taxon>
        <taxon>Pseudomonadota</taxon>
        <taxon>Gammaproteobacteria</taxon>
        <taxon>Enterobacterales</taxon>
        <taxon>Enterobacteriaceae</taxon>
        <taxon>Shigella</taxon>
    </lineage>
</organism>
<dbReference type="EC" id="3.2.1.28" evidence="1"/>
<dbReference type="EMBL" id="CP000038">
    <property type="protein sequence ID" value="AAZ90119.1"/>
    <property type="molecule type" value="Genomic_DNA"/>
</dbReference>
<dbReference type="RefSeq" id="WP_000934218.1">
    <property type="nucleotide sequence ID" value="NC_007384.1"/>
</dbReference>
<dbReference type="SMR" id="Q3YWJ3"/>
<dbReference type="CAZy" id="GH37">
    <property type="family name" value="Glycoside Hydrolase Family 37"/>
</dbReference>
<dbReference type="KEGG" id="ssn:SSON_3567"/>
<dbReference type="HOGENOM" id="CLU_006451_3_1_6"/>
<dbReference type="UniPathway" id="UPA00300">
    <property type="reaction ID" value="UER00535"/>
</dbReference>
<dbReference type="Proteomes" id="UP000002529">
    <property type="component" value="Chromosome"/>
</dbReference>
<dbReference type="GO" id="GO:0005737">
    <property type="term" value="C:cytoplasm"/>
    <property type="evidence" value="ECO:0007669"/>
    <property type="project" value="UniProtKB-SubCell"/>
</dbReference>
<dbReference type="GO" id="GO:0004555">
    <property type="term" value="F:alpha,alpha-trehalase activity"/>
    <property type="evidence" value="ECO:0007669"/>
    <property type="project" value="UniProtKB-UniRule"/>
</dbReference>
<dbReference type="GO" id="GO:0071474">
    <property type="term" value="P:cellular hyperosmotic response"/>
    <property type="evidence" value="ECO:0007669"/>
    <property type="project" value="InterPro"/>
</dbReference>
<dbReference type="GO" id="GO:0005993">
    <property type="term" value="P:trehalose catabolic process"/>
    <property type="evidence" value="ECO:0007669"/>
    <property type="project" value="UniProtKB-UniRule"/>
</dbReference>
<dbReference type="FunFam" id="1.50.10.10:FF:000003">
    <property type="entry name" value="Cytoplasmic trehalase"/>
    <property type="match status" value="1"/>
</dbReference>
<dbReference type="Gene3D" id="1.50.10.10">
    <property type="match status" value="1"/>
</dbReference>
<dbReference type="HAMAP" id="MF_01059">
    <property type="entry name" value="Cyt_trehalase"/>
    <property type="match status" value="1"/>
</dbReference>
<dbReference type="InterPro" id="IPR008928">
    <property type="entry name" value="6-hairpin_glycosidase_sf"/>
</dbReference>
<dbReference type="InterPro" id="IPR012341">
    <property type="entry name" value="6hp_glycosidase-like_sf"/>
</dbReference>
<dbReference type="InterPro" id="IPR023715">
    <property type="entry name" value="Cyt_trehalase"/>
</dbReference>
<dbReference type="InterPro" id="IPR001661">
    <property type="entry name" value="Glyco_hydro_37"/>
</dbReference>
<dbReference type="InterPro" id="IPR018232">
    <property type="entry name" value="Glyco_hydro_37_CS"/>
</dbReference>
<dbReference type="NCBIfam" id="NF009773">
    <property type="entry name" value="PRK13270.1"/>
    <property type="match status" value="1"/>
</dbReference>
<dbReference type="NCBIfam" id="NF009774">
    <property type="entry name" value="PRK13271.1"/>
    <property type="match status" value="1"/>
</dbReference>
<dbReference type="PANTHER" id="PTHR23403:SF8">
    <property type="entry name" value="CYTOPLASMIC TREHALASE"/>
    <property type="match status" value="1"/>
</dbReference>
<dbReference type="PANTHER" id="PTHR23403">
    <property type="entry name" value="TREHALASE"/>
    <property type="match status" value="1"/>
</dbReference>
<dbReference type="Pfam" id="PF01204">
    <property type="entry name" value="Trehalase"/>
    <property type="match status" value="1"/>
</dbReference>
<dbReference type="PRINTS" id="PR00744">
    <property type="entry name" value="GLHYDRLASE37"/>
</dbReference>
<dbReference type="SUPFAM" id="SSF48208">
    <property type="entry name" value="Six-hairpin glycosidases"/>
    <property type="match status" value="1"/>
</dbReference>
<dbReference type="PROSITE" id="PS00927">
    <property type="entry name" value="TREHALASE_1"/>
    <property type="match status" value="1"/>
</dbReference>
<dbReference type="PROSITE" id="PS00928">
    <property type="entry name" value="TREHALASE_2"/>
    <property type="match status" value="1"/>
</dbReference>
<comment type="function">
    <text evidence="1">Hydrolyzes trehalose to glucose. Could be involved, in cells returning to low osmolarity conditions, in the utilization of the accumulated cytoplasmic trehalose, which was synthesized in response to high osmolarity.</text>
</comment>
<comment type="catalytic activity">
    <reaction evidence="1">
        <text>alpha,alpha-trehalose + H2O = alpha-D-glucose + beta-D-glucose</text>
        <dbReference type="Rhea" id="RHEA:32675"/>
        <dbReference type="ChEBI" id="CHEBI:15377"/>
        <dbReference type="ChEBI" id="CHEBI:15903"/>
        <dbReference type="ChEBI" id="CHEBI:16551"/>
        <dbReference type="ChEBI" id="CHEBI:17925"/>
        <dbReference type="EC" id="3.2.1.28"/>
    </reaction>
</comment>
<comment type="pathway">
    <text evidence="1">Glycan degradation; trehalose degradation; D-glucose from alpha,alpha-trehalose: step 1/1.</text>
</comment>
<comment type="subunit">
    <text evidence="1">Monomer.</text>
</comment>
<comment type="subcellular location">
    <subcellularLocation>
        <location evidence="1">Cytoplasm</location>
    </subcellularLocation>
</comment>
<comment type="similarity">
    <text evidence="1">Belongs to the glycosyl hydrolase 37 family.</text>
</comment>
<name>TREF_SHISS</name>
<evidence type="ECO:0000255" key="1">
    <source>
        <dbReference type="HAMAP-Rule" id="MF_01059"/>
    </source>
</evidence>
<protein>
    <recommendedName>
        <fullName evidence="1">Cytoplasmic trehalase</fullName>
        <ecNumber evidence="1">3.2.1.28</ecNumber>
    </recommendedName>
    <alternativeName>
        <fullName evidence="1">Alpha,alpha-trehalase</fullName>
    </alternativeName>
    <alternativeName>
        <fullName evidence="1">Alpha,alpha-trehalose glucohydrolase</fullName>
    </alternativeName>
</protein>
<accession>Q3YWJ3</accession>
<gene>
    <name evidence="1" type="primary">treF</name>
    <name type="ordered locus">SSON_3567</name>
</gene>
<reference key="1">
    <citation type="journal article" date="2005" name="Nucleic Acids Res.">
        <title>Genome dynamics and diversity of Shigella species, the etiologic agents of bacillary dysentery.</title>
        <authorList>
            <person name="Yang F."/>
            <person name="Yang J."/>
            <person name="Zhang X."/>
            <person name="Chen L."/>
            <person name="Jiang Y."/>
            <person name="Yan Y."/>
            <person name="Tang X."/>
            <person name="Wang J."/>
            <person name="Xiong Z."/>
            <person name="Dong J."/>
            <person name="Xue Y."/>
            <person name="Zhu Y."/>
            <person name="Xu X."/>
            <person name="Sun L."/>
            <person name="Chen S."/>
            <person name="Nie H."/>
            <person name="Peng J."/>
            <person name="Xu J."/>
            <person name="Wang Y."/>
            <person name="Yuan Z."/>
            <person name="Wen Y."/>
            <person name="Yao Z."/>
            <person name="Shen Y."/>
            <person name="Qiang B."/>
            <person name="Hou Y."/>
            <person name="Yu J."/>
            <person name="Jin Q."/>
        </authorList>
    </citation>
    <scope>NUCLEOTIDE SEQUENCE [LARGE SCALE GENOMIC DNA]</scope>
    <source>
        <strain>Ss046</strain>
    </source>
</reference>